<feature type="chain" id="PRO_1000091327" description="Leucine--tRNA ligase">
    <location>
        <begin position="1"/>
        <end position="804"/>
    </location>
</feature>
<feature type="short sequence motif" description="'HIGH' region">
    <location>
        <begin position="39"/>
        <end position="50"/>
    </location>
</feature>
<feature type="short sequence motif" description="'KMSKS' region">
    <location>
        <begin position="573"/>
        <end position="577"/>
    </location>
</feature>
<feature type="binding site" evidence="1">
    <location>
        <position position="576"/>
    </location>
    <ligand>
        <name>ATP</name>
        <dbReference type="ChEBI" id="CHEBI:30616"/>
    </ligand>
</feature>
<sequence>MYNHKTVEKKWQKYWAEHDTFKTGNDPKKKNYYALDMFPFPSGKGLHVGHPEGYTATDIISRMKRAQGYNVLHPMGWDAFGLPTEQYALKTGEDPEKVTKENIANFKKQLNKLGFSYDWDREVTTSDPNYYKWTQWVFEQMYKKGLAYEAEVPVNWSPDLGTVVANEEIVDGKTERGGYPVYRRNMRQWMLKMTAYADRLLEDLDDLDWPEPVKEMQRNWIGRSEGAQVTFKVKDSDKTFDVFTTRPDTLFGVSYTVLAPESKLVQEITTPEQKAAVDSYIKKIESKSDLERTDLNKDKTGVFTGAYAINPVNGKEVPVWISDYVLASYGTGAVMAVPAHDDRDYAFATKFGLPINRVIEGGDLEKEAFTGNGKHINSDFLDGLDNEEAKKRMIEWLEDHNAGQKKVNYKLRDWDFSRQRYWGEPIPVIHWEDGTTSLVPEDELPLRLPHATDIKPSGTPESPLANLTDWVNVVDKNGRKGKRETNTMPNWAGSSWYYLRYIDPHNDKELADYDLLKKWLPVDLYIGGAEHAVRHLLYARFWHKVLYDLGVVPTKEPFQRLYNQGLILKNHEKMSKSKGNVVNPDDVIDEYGADSLRMYEMFMGPLDASIDWDDNGPASTKKFLDRVWRLFVNDLDLKAIPQERIVDKNDGELDKVYAETVKKVTEDFDALHFNTAISQMMVFINAAQKAKTIPREYAEGFVKLLAPVAPHMMEEIWQVFGHDESISYAKWPEYDPAKLVESTVEIMVQVNGKLRGKFKAAKDSAKDALEKEALSLDHVQKFLDGKDVKKVIVIPNKIVNIVAK</sequence>
<organism>
    <name type="scientific">Lactobacillus gasseri (strain ATCC 33323 / DSM 20243 / BCRC 14619 / CIP 102991 / JCM 1131 / KCTC 3163 / NCIMB 11718 / NCTC 13722 / AM63)</name>
    <dbReference type="NCBI Taxonomy" id="324831"/>
    <lineage>
        <taxon>Bacteria</taxon>
        <taxon>Bacillati</taxon>
        <taxon>Bacillota</taxon>
        <taxon>Bacilli</taxon>
        <taxon>Lactobacillales</taxon>
        <taxon>Lactobacillaceae</taxon>
        <taxon>Lactobacillus</taxon>
    </lineage>
</organism>
<reference key="1">
    <citation type="journal article" date="2006" name="Proc. Natl. Acad. Sci. U.S.A.">
        <title>Comparative genomics of the lactic acid bacteria.</title>
        <authorList>
            <person name="Makarova K.S."/>
            <person name="Slesarev A."/>
            <person name="Wolf Y.I."/>
            <person name="Sorokin A."/>
            <person name="Mirkin B."/>
            <person name="Koonin E.V."/>
            <person name="Pavlov A."/>
            <person name="Pavlova N."/>
            <person name="Karamychev V."/>
            <person name="Polouchine N."/>
            <person name="Shakhova V."/>
            <person name="Grigoriev I."/>
            <person name="Lou Y."/>
            <person name="Rohksar D."/>
            <person name="Lucas S."/>
            <person name="Huang K."/>
            <person name="Goodstein D.M."/>
            <person name="Hawkins T."/>
            <person name="Plengvidhya V."/>
            <person name="Welker D."/>
            <person name="Hughes J."/>
            <person name="Goh Y."/>
            <person name="Benson A."/>
            <person name="Baldwin K."/>
            <person name="Lee J.-H."/>
            <person name="Diaz-Muniz I."/>
            <person name="Dosti B."/>
            <person name="Smeianov V."/>
            <person name="Wechter W."/>
            <person name="Barabote R."/>
            <person name="Lorca G."/>
            <person name="Altermann E."/>
            <person name="Barrangou R."/>
            <person name="Ganesan B."/>
            <person name="Xie Y."/>
            <person name="Rawsthorne H."/>
            <person name="Tamir D."/>
            <person name="Parker C."/>
            <person name="Breidt F."/>
            <person name="Broadbent J.R."/>
            <person name="Hutkins R."/>
            <person name="O'Sullivan D."/>
            <person name="Steele J."/>
            <person name="Unlu G."/>
            <person name="Saier M.H. Jr."/>
            <person name="Klaenhammer T."/>
            <person name="Richardson P."/>
            <person name="Kozyavkin S."/>
            <person name="Weimer B.C."/>
            <person name="Mills D.A."/>
        </authorList>
    </citation>
    <scope>NUCLEOTIDE SEQUENCE [LARGE SCALE GENOMIC DNA]</scope>
    <source>
        <strain>ATCC 33323 / DSM 20243 / BCRC 14619 / CIP 102991 / JCM 1131 / KCTC 3163 / NCIMB 11718 / NCTC 13722 / AM63</strain>
    </source>
</reference>
<proteinExistence type="inferred from homology"/>
<accession>Q045L5</accession>
<evidence type="ECO:0000255" key="1">
    <source>
        <dbReference type="HAMAP-Rule" id="MF_00049"/>
    </source>
</evidence>
<name>SYL_LACGA</name>
<comment type="catalytic activity">
    <reaction evidence="1">
        <text>tRNA(Leu) + L-leucine + ATP = L-leucyl-tRNA(Leu) + AMP + diphosphate</text>
        <dbReference type="Rhea" id="RHEA:11688"/>
        <dbReference type="Rhea" id="RHEA-COMP:9613"/>
        <dbReference type="Rhea" id="RHEA-COMP:9622"/>
        <dbReference type="ChEBI" id="CHEBI:30616"/>
        <dbReference type="ChEBI" id="CHEBI:33019"/>
        <dbReference type="ChEBI" id="CHEBI:57427"/>
        <dbReference type="ChEBI" id="CHEBI:78442"/>
        <dbReference type="ChEBI" id="CHEBI:78494"/>
        <dbReference type="ChEBI" id="CHEBI:456215"/>
        <dbReference type="EC" id="6.1.1.4"/>
    </reaction>
</comment>
<comment type="subcellular location">
    <subcellularLocation>
        <location evidence="1">Cytoplasm</location>
    </subcellularLocation>
</comment>
<comment type="similarity">
    <text evidence="1">Belongs to the class-I aminoacyl-tRNA synthetase family.</text>
</comment>
<gene>
    <name evidence="1" type="primary">leuS</name>
    <name type="ordered locus">LGAS_0459</name>
</gene>
<protein>
    <recommendedName>
        <fullName evidence="1">Leucine--tRNA ligase</fullName>
        <ecNumber evidence="1">6.1.1.4</ecNumber>
    </recommendedName>
    <alternativeName>
        <fullName evidence="1">Leucyl-tRNA synthetase</fullName>
        <shortName evidence="1">LeuRS</shortName>
    </alternativeName>
</protein>
<dbReference type="EC" id="6.1.1.4" evidence="1"/>
<dbReference type="EMBL" id="CP000413">
    <property type="protein sequence ID" value="ABJ59857.1"/>
    <property type="molecule type" value="Genomic_DNA"/>
</dbReference>
<dbReference type="RefSeq" id="WP_003647691.1">
    <property type="nucleotide sequence ID" value="NZ_WBMG01000004.1"/>
</dbReference>
<dbReference type="SMR" id="Q045L5"/>
<dbReference type="GeneID" id="29639768"/>
<dbReference type="KEGG" id="lga:LGAS_0459"/>
<dbReference type="HOGENOM" id="CLU_004427_0_0_9"/>
<dbReference type="BioCyc" id="LGAS324831:G1G6Y-459-MONOMER"/>
<dbReference type="Proteomes" id="UP000000664">
    <property type="component" value="Chromosome"/>
</dbReference>
<dbReference type="GO" id="GO:0005829">
    <property type="term" value="C:cytosol"/>
    <property type="evidence" value="ECO:0007669"/>
    <property type="project" value="TreeGrafter"/>
</dbReference>
<dbReference type="GO" id="GO:0002161">
    <property type="term" value="F:aminoacyl-tRNA deacylase activity"/>
    <property type="evidence" value="ECO:0007669"/>
    <property type="project" value="InterPro"/>
</dbReference>
<dbReference type="GO" id="GO:0005524">
    <property type="term" value="F:ATP binding"/>
    <property type="evidence" value="ECO:0007669"/>
    <property type="project" value="UniProtKB-UniRule"/>
</dbReference>
<dbReference type="GO" id="GO:0004823">
    <property type="term" value="F:leucine-tRNA ligase activity"/>
    <property type="evidence" value="ECO:0007669"/>
    <property type="project" value="UniProtKB-UniRule"/>
</dbReference>
<dbReference type="GO" id="GO:0006429">
    <property type="term" value="P:leucyl-tRNA aminoacylation"/>
    <property type="evidence" value="ECO:0007669"/>
    <property type="project" value="UniProtKB-UniRule"/>
</dbReference>
<dbReference type="CDD" id="cd07958">
    <property type="entry name" value="Anticodon_Ia_Leu_BEm"/>
    <property type="match status" value="1"/>
</dbReference>
<dbReference type="CDD" id="cd00812">
    <property type="entry name" value="LeuRS_core"/>
    <property type="match status" value="1"/>
</dbReference>
<dbReference type="FunFam" id="3.10.20.590:FF:000001">
    <property type="entry name" value="Leucine--tRNA ligase"/>
    <property type="match status" value="1"/>
</dbReference>
<dbReference type="FunFam" id="3.40.50.620:FF:000056">
    <property type="entry name" value="Leucine--tRNA ligase"/>
    <property type="match status" value="1"/>
</dbReference>
<dbReference type="FunFam" id="3.40.50.620:FF:000077">
    <property type="entry name" value="Leucine--tRNA ligase"/>
    <property type="match status" value="1"/>
</dbReference>
<dbReference type="FunFam" id="1.10.730.10:FF:000011">
    <property type="entry name" value="Leucine--tRNA ligase chloroplastic/mitochondrial"/>
    <property type="match status" value="1"/>
</dbReference>
<dbReference type="Gene3D" id="3.10.20.590">
    <property type="match status" value="1"/>
</dbReference>
<dbReference type="Gene3D" id="3.40.50.620">
    <property type="entry name" value="HUPs"/>
    <property type="match status" value="2"/>
</dbReference>
<dbReference type="Gene3D" id="1.10.730.10">
    <property type="entry name" value="Isoleucyl-tRNA Synthetase, Domain 1"/>
    <property type="match status" value="1"/>
</dbReference>
<dbReference type="HAMAP" id="MF_00049_B">
    <property type="entry name" value="Leu_tRNA_synth_B"/>
    <property type="match status" value="1"/>
</dbReference>
<dbReference type="InterPro" id="IPR001412">
    <property type="entry name" value="aa-tRNA-synth_I_CS"/>
</dbReference>
<dbReference type="InterPro" id="IPR002300">
    <property type="entry name" value="aa-tRNA-synth_Ia"/>
</dbReference>
<dbReference type="InterPro" id="IPR002302">
    <property type="entry name" value="Leu-tRNA-ligase"/>
</dbReference>
<dbReference type="InterPro" id="IPR025709">
    <property type="entry name" value="Leu_tRNA-synth_edit"/>
</dbReference>
<dbReference type="InterPro" id="IPR013155">
    <property type="entry name" value="M/V/L/I-tRNA-synth_anticd-bd"/>
</dbReference>
<dbReference type="InterPro" id="IPR015413">
    <property type="entry name" value="Methionyl/Leucyl_tRNA_Synth"/>
</dbReference>
<dbReference type="InterPro" id="IPR014729">
    <property type="entry name" value="Rossmann-like_a/b/a_fold"/>
</dbReference>
<dbReference type="InterPro" id="IPR009080">
    <property type="entry name" value="tRNAsynth_Ia_anticodon-bd"/>
</dbReference>
<dbReference type="InterPro" id="IPR009008">
    <property type="entry name" value="Val/Leu/Ile-tRNA-synth_edit"/>
</dbReference>
<dbReference type="NCBIfam" id="TIGR00396">
    <property type="entry name" value="leuS_bact"/>
    <property type="match status" value="1"/>
</dbReference>
<dbReference type="PANTHER" id="PTHR43740:SF2">
    <property type="entry name" value="LEUCINE--TRNA LIGASE, MITOCHONDRIAL"/>
    <property type="match status" value="1"/>
</dbReference>
<dbReference type="PANTHER" id="PTHR43740">
    <property type="entry name" value="LEUCYL-TRNA SYNTHETASE"/>
    <property type="match status" value="1"/>
</dbReference>
<dbReference type="Pfam" id="PF08264">
    <property type="entry name" value="Anticodon_1"/>
    <property type="match status" value="1"/>
</dbReference>
<dbReference type="Pfam" id="PF00133">
    <property type="entry name" value="tRNA-synt_1"/>
    <property type="match status" value="1"/>
</dbReference>
<dbReference type="Pfam" id="PF13603">
    <property type="entry name" value="tRNA-synt_1_2"/>
    <property type="match status" value="1"/>
</dbReference>
<dbReference type="Pfam" id="PF09334">
    <property type="entry name" value="tRNA-synt_1g"/>
    <property type="match status" value="1"/>
</dbReference>
<dbReference type="PRINTS" id="PR00985">
    <property type="entry name" value="TRNASYNTHLEU"/>
</dbReference>
<dbReference type="SUPFAM" id="SSF47323">
    <property type="entry name" value="Anticodon-binding domain of a subclass of class I aminoacyl-tRNA synthetases"/>
    <property type="match status" value="1"/>
</dbReference>
<dbReference type="SUPFAM" id="SSF52374">
    <property type="entry name" value="Nucleotidylyl transferase"/>
    <property type="match status" value="1"/>
</dbReference>
<dbReference type="SUPFAM" id="SSF50677">
    <property type="entry name" value="ValRS/IleRS/LeuRS editing domain"/>
    <property type="match status" value="1"/>
</dbReference>
<dbReference type="PROSITE" id="PS00178">
    <property type="entry name" value="AA_TRNA_LIGASE_I"/>
    <property type="match status" value="1"/>
</dbReference>
<keyword id="KW-0030">Aminoacyl-tRNA synthetase</keyword>
<keyword id="KW-0067">ATP-binding</keyword>
<keyword id="KW-0963">Cytoplasm</keyword>
<keyword id="KW-0436">Ligase</keyword>
<keyword id="KW-0547">Nucleotide-binding</keyword>
<keyword id="KW-0648">Protein biosynthesis</keyword>